<sequence>MLKPLGDRVLIEVSEEEEKTVGGIVLASTAQEKPQTGKVVAVGPGRTLDNGELATVPVNVGDTVLFEKYAGSEVKYDGQDYMIFSAKDLVAIVE</sequence>
<name>CH10_TETHA</name>
<proteinExistence type="inferred from homology"/>
<accession>Q93GT7</accession>
<gene>
    <name evidence="1" type="primary">groES</name>
    <name evidence="1" type="synonym">groS</name>
</gene>
<evidence type="ECO:0000255" key="1">
    <source>
        <dbReference type="HAMAP-Rule" id="MF_00580"/>
    </source>
</evidence>
<reference key="1">
    <citation type="journal article" date="2002" name="Biosci. Biotechnol. Biochem.">
        <title>The groESL operon of the halophilic lactic acid bacterium Tetragenococcus halophila.</title>
        <authorList>
            <person name="Fukuda D."/>
            <person name="Watanabe M."/>
            <person name="Aso Y."/>
            <person name="Sonomoto K."/>
            <person name="Ishizaki A."/>
        </authorList>
    </citation>
    <scope>NUCLEOTIDE SEQUENCE [GENOMIC DNA]</scope>
</reference>
<keyword id="KW-0143">Chaperone</keyword>
<keyword id="KW-0963">Cytoplasm</keyword>
<comment type="function">
    <text evidence="1">Together with the chaperonin GroEL, plays an essential role in assisting protein folding. The GroEL-GroES system forms a nano-cage that allows encapsulation of the non-native substrate proteins and provides a physical environment optimized to promote and accelerate protein folding. GroES binds to the apical surface of the GroEL ring, thereby capping the opening of the GroEL channel.</text>
</comment>
<comment type="subunit">
    <text evidence="1">Heptamer of 7 subunits arranged in a ring. Interacts with the chaperonin GroEL.</text>
</comment>
<comment type="subcellular location">
    <subcellularLocation>
        <location evidence="1">Cytoplasm</location>
    </subcellularLocation>
</comment>
<comment type="similarity">
    <text evidence="1">Belongs to the GroES chaperonin family.</text>
</comment>
<organism>
    <name type="scientific">Tetragenococcus halophilus</name>
    <name type="common">Pediococcus halophilus</name>
    <dbReference type="NCBI Taxonomy" id="51669"/>
    <lineage>
        <taxon>Bacteria</taxon>
        <taxon>Bacillati</taxon>
        <taxon>Bacillota</taxon>
        <taxon>Bacilli</taxon>
        <taxon>Lactobacillales</taxon>
        <taxon>Enterococcaceae</taxon>
        <taxon>Tetragenococcus</taxon>
    </lineage>
</organism>
<protein>
    <recommendedName>
        <fullName evidence="1">Co-chaperonin GroES</fullName>
    </recommendedName>
    <alternativeName>
        <fullName evidence="1">10 kDa chaperonin</fullName>
    </alternativeName>
    <alternativeName>
        <fullName evidence="1">Chaperonin-10</fullName>
        <shortName evidence="1">Cpn10</shortName>
    </alternativeName>
</protein>
<feature type="chain" id="PRO_0000174881" description="Co-chaperonin GroES">
    <location>
        <begin position="1"/>
        <end position="94"/>
    </location>
</feature>
<dbReference type="EMBL" id="AB073399">
    <property type="protein sequence ID" value="BAB70660.1"/>
    <property type="molecule type" value="Genomic_DNA"/>
</dbReference>
<dbReference type="SMR" id="Q93GT7"/>
<dbReference type="GO" id="GO:0005737">
    <property type="term" value="C:cytoplasm"/>
    <property type="evidence" value="ECO:0007669"/>
    <property type="project" value="UniProtKB-SubCell"/>
</dbReference>
<dbReference type="GO" id="GO:0005524">
    <property type="term" value="F:ATP binding"/>
    <property type="evidence" value="ECO:0007669"/>
    <property type="project" value="InterPro"/>
</dbReference>
<dbReference type="GO" id="GO:0046872">
    <property type="term" value="F:metal ion binding"/>
    <property type="evidence" value="ECO:0007669"/>
    <property type="project" value="TreeGrafter"/>
</dbReference>
<dbReference type="GO" id="GO:0044183">
    <property type="term" value="F:protein folding chaperone"/>
    <property type="evidence" value="ECO:0007669"/>
    <property type="project" value="InterPro"/>
</dbReference>
<dbReference type="GO" id="GO:0051087">
    <property type="term" value="F:protein-folding chaperone binding"/>
    <property type="evidence" value="ECO:0007669"/>
    <property type="project" value="TreeGrafter"/>
</dbReference>
<dbReference type="GO" id="GO:0051082">
    <property type="term" value="F:unfolded protein binding"/>
    <property type="evidence" value="ECO:0007669"/>
    <property type="project" value="TreeGrafter"/>
</dbReference>
<dbReference type="GO" id="GO:0051085">
    <property type="term" value="P:chaperone cofactor-dependent protein refolding"/>
    <property type="evidence" value="ECO:0007669"/>
    <property type="project" value="TreeGrafter"/>
</dbReference>
<dbReference type="CDD" id="cd00320">
    <property type="entry name" value="cpn10"/>
    <property type="match status" value="1"/>
</dbReference>
<dbReference type="FunFam" id="2.30.33.40:FF:000001">
    <property type="entry name" value="10 kDa chaperonin"/>
    <property type="match status" value="1"/>
</dbReference>
<dbReference type="Gene3D" id="2.30.33.40">
    <property type="entry name" value="GroES chaperonin"/>
    <property type="match status" value="1"/>
</dbReference>
<dbReference type="HAMAP" id="MF_00580">
    <property type="entry name" value="CH10"/>
    <property type="match status" value="1"/>
</dbReference>
<dbReference type="InterPro" id="IPR020818">
    <property type="entry name" value="Chaperonin_GroES"/>
</dbReference>
<dbReference type="InterPro" id="IPR037124">
    <property type="entry name" value="Chaperonin_GroES_sf"/>
</dbReference>
<dbReference type="InterPro" id="IPR018369">
    <property type="entry name" value="Chaprnonin_Cpn10_CS"/>
</dbReference>
<dbReference type="InterPro" id="IPR011032">
    <property type="entry name" value="GroES-like_sf"/>
</dbReference>
<dbReference type="NCBIfam" id="NF001531">
    <property type="entry name" value="PRK00364.2-2"/>
    <property type="match status" value="1"/>
</dbReference>
<dbReference type="NCBIfam" id="NF001533">
    <property type="entry name" value="PRK00364.2-4"/>
    <property type="match status" value="1"/>
</dbReference>
<dbReference type="NCBIfam" id="NF001534">
    <property type="entry name" value="PRK00364.2-5"/>
    <property type="match status" value="1"/>
</dbReference>
<dbReference type="PANTHER" id="PTHR10772">
    <property type="entry name" value="10 KDA HEAT SHOCK PROTEIN"/>
    <property type="match status" value="1"/>
</dbReference>
<dbReference type="PANTHER" id="PTHR10772:SF58">
    <property type="entry name" value="CO-CHAPERONIN GROES"/>
    <property type="match status" value="1"/>
</dbReference>
<dbReference type="Pfam" id="PF00166">
    <property type="entry name" value="Cpn10"/>
    <property type="match status" value="1"/>
</dbReference>
<dbReference type="PRINTS" id="PR00297">
    <property type="entry name" value="CHAPERONIN10"/>
</dbReference>
<dbReference type="SMART" id="SM00883">
    <property type="entry name" value="Cpn10"/>
    <property type="match status" value="1"/>
</dbReference>
<dbReference type="SUPFAM" id="SSF50129">
    <property type="entry name" value="GroES-like"/>
    <property type="match status" value="1"/>
</dbReference>
<dbReference type="PROSITE" id="PS00681">
    <property type="entry name" value="CHAPERONINS_CPN10"/>
    <property type="match status" value="1"/>
</dbReference>